<comment type="function">
    <text evidence="1">Gustducin-coupled receptor implicated in the perception of bitter compounds in the oral cavity and the gastrointestinal tract. Signals through PLCB2 and the calcium-regulated cation channel TRPM5 (By similarity).</text>
</comment>
<comment type="subcellular location">
    <subcellularLocation>
        <location evidence="3">Membrane</location>
        <topology evidence="3">Multi-pass membrane protein</topology>
    </subcellularLocation>
</comment>
<comment type="miscellaneous">
    <text evidence="3">Several bitter taste receptors are expressed in a single taste receptor cell.</text>
</comment>
<comment type="similarity">
    <text evidence="2">Belongs to the G-protein coupled receptor T2R family.</text>
</comment>
<feature type="chain" id="PRO_0000249184" description="Taste receptor type 2 member 40">
    <location>
        <begin position="1"/>
        <end position="319"/>
    </location>
</feature>
<feature type="topological domain" description="Extracellular" evidence="2">
    <location>
        <begin position="1"/>
        <end position="17"/>
    </location>
</feature>
<feature type="transmembrane region" description="Helical; Name=1" evidence="2">
    <location>
        <begin position="18"/>
        <end position="38"/>
    </location>
</feature>
<feature type="topological domain" description="Cytoplasmic" evidence="2">
    <location>
        <begin position="39"/>
        <end position="66"/>
    </location>
</feature>
<feature type="transmembrane region" description="Helical; Name=2" evidence="2">
    <location>
        <begin position="67"/>
        <end position="87"/>
    </location>
</feature>
<feature type="topological domain" description="Extracellular" evidence="2">
    <location>
        <begin position="88"/>
        <end position="98"/>
    </location>
</feature>
<feature type="transmembrane region" description="Helical; Name=3" evidence="2">
    <location>
        <begin position="99"/>
        <end position="119"/>
    </location>
</feature>
<feature type="topological domain" description="Cytoplasmic" evidence="2">
    <location>
        <begin position="120"/>
        <end position="136"/>
    </location>
</feature>
<feature type="transmembrane region" description="Helical; Name=4" evidence="2">
    <location>
        <begin position="137"/>
        <end position="157"/>
    </location>
</feature>
<feature type="topological domain" description="Extracellular" evidence="2">
    <location>
        <begin position="158"/>
        <end position="195"/>
    </location>
</feature>
<feature type="transmembrane region" description="Helical; Name=5" evidence="2">
    <location>
        <begin position="196"/>
        <end position="216"/>
    </location>
</feature>
<feature type="topological domain" description="Cytoplasmic" evidence="2">
    <location>
        <begin position="217"/>
        <end position="251"/>
    </location>
</feature>
<feature type="transmembrane region" description="Helical; Name=6" evidence="2">
    <location>
        <begin position="252"/>
        <end position="272"/>
    </location>
</feature>
<feature type="topological domain" description="Extracellular" evidence="2">
    <location>
        <begin position="273"/>
        <end position="276"/>
    </location>
</feature>
<feature type="transmembrane region" description="Helical; Name=7" evidence="2">
    <location>
        <begin position="277"/>
        <end position="297"/>
    </location>
</feature>
<feature type="topological domain" description="Cytoplasmic" evidence="2">
    <location>
        <begin position="298"/>
        <end position="319"/>
    </location>
</feature>
<feature type="glycosylation site" description="N-linked (GlcNAc...) asparagine" evidence="2">
    <location>
        <position position="169"/>
    </location>
</feature>
<feature type="glycosylation site" description="N-linked (GlcNAc...) asparagine" evidence="2">
    <location>
        <position position="178"/>
    </location>
</feature>
<proteinExistence type="inferred from homology"/>
<reference evidence="4" key="1">
    <citation type="submission" date="2003-08" db="EMBL/GenBank/DDBJ databases">
        <title>Identification of new putative rat taste receptors belonging to the T2R family.</title>
        <authorList>
            <person name="Conte C."/>
            <person name="Ebeling M."/>
            <person name="Marcuz A."/>
            <person name="Andres-Barquin P.J."/>
        </authorList>
    </citation>
    <scope>NUCLEOTIDE SEQUENCE [GENOMIC DNA]</scope>
    <source>
        <strain evidence="4">Sprague-Dawley</strain>
    </source>
</reference>
<keyword id="KW-0297">G-protein coupled receptor</keyword>
<keyword id="KW-0325">Glycoprotein</keyword>
<keyword id="KW-0472">Membrane</keyword>
<keyword id="KW-0675">Receptor</keyword>
<keyword id="KW-1185">Reference proteome</keyword>
<keyword id="KW-0716">Sensory transduction</keyword>
<keyword id="KW-0919">Taste</keyword>
<keyword id="KW-0807">Transducer</keyword>
<keyword id="KW-0812">Transmembrane</keyword>
<keyword id="KW-1133">Transmembrane helix</keyword>
<gene>
    <name evidence="1" type="primary">Tas2r40</name>
    <name type="synonym">T2r18</name>
    <name evidence="5" type="synonym">Tas2r144</name>
</gene>
<name>T2R40_RAT</name>
<organism>
    <name type="scientific">Rattus norvegicus</name>
    <name type="common">Rat</name>
    <dbReference type="NCBI Taxonomy" id="10116"/>
    <lineage>
        <taxon>Eukaryota</taxon>
        <taxon>Metazoa</taxon>
        <taxon>Chordata</taxon>
        <taxon>Craniata</taxon>
        <taxon>Vertebrata</taxon>
        <taxon>Euteleostomi</taxon>
        <taxon>Mammalia</taxon>
        <taxon>Eutheria</taxon>
        <taxon>Euarchontoglires</taxon>
        <taxon>Glires</taxon>
        <taxon>Rodentia</taxon>
        <taxon>Myomorpha</taxon>
        <taxon>Muroidea</taxon>
        <taxon>Muridae</taxon>
        <taxon>Murinae</taxon>
        <taxon>Rattus</taxon>
    </lineage>
</organism>
<evidence type="ECO:0000250" key="1">
    <source>
        <dbReference type="UniProtKB" id="P59535"/>
    </source>
</evidence>
<evidence type="ECO:0000255" key="2"/>
<evidence type="ECO:0000305" key="3"/>
<evidence type="ECO:0000312" key="4">
    <source>
        <dbReference type="EMBL" id="AAR13347.1"/>
    </source>
</evidence>
<evidence type="ECO:0000312" key="5">
    <source>
        <dbReference type="RGD" id="1562314"/>
    </source>
</evidence>
<protein>
    <recommendedName>
        <fullName>Taste receptor type 2 member 40</fullName>
        <shortName>T2R40</shortName>
    </recommendedName>
    <alternativeName>
        <fullName evidence="5">Taste receptor type 2 member 144</fullName>
    </alternativeName>
    <alternativeName>
        <fullName>Taste receptor type 2 member 18</fullName>
        <shortName>T2R18</shortName>
    </alternativeName>
</protein>
<accession>Q67ET2</accession>
<dbReference type="EMBL" id="AY362738">
    <property type="protein sequence ID" value="AAR13347.1"/>
    <property type="molecule type" value="Genomic_DNA"/>
</dbReference>
<dbReference type="RefSeq" id="NP_001020321.1">
    <property type="nucleotide sequence ID" value="NM_001025150.1"/>
</dbReference>
<dbReference type="SMR" id="Q67ET2"/>
<dbReference type="FunCoup" id="Q67ET2">
    <property type="interactions" value="86"/>
</dbReference>
<dbReference type="STRING" id="10116.ENSRNOP00000033127"/>
<dbReference type="GlyCosmos" id="Q67ET2">
    <property type="glycosylation" value="2 sites, No reported glycans"/>
</dbReference>
<dbReference type="GlyGen" id="Q67ET2">
    <property type="glycosylation" value="2 sites"/>
</dbReference>
<dbReference type="PhosphoSitePlus" id="Q67ET2"/>
<dbReference type="PaxDb" id="10116-ENSRNOP00000033127"/>
<dbReference type="Ensembl" id="ENSRNOT00000037194.2">
    <property type="protein sequence ID" value="ENSRNOP00000033127.1"/>
    <property type="gene ID" value="ENSRNOG00000028130.2"/>
</dbReference>
<dbReference type="GeneID" id="500101"/>
<dbReference type="KEGG" id="rno:500101"/>
<dbReference type="UCSC" id="RGD:1562314">
    <property type="organism name" value="rat"/>
</dbReference>
<dbReference type="AGR" id="RGD:1562314"/>
<dbReference type="CTD" id="387515"/>
<dbReference type="RGD" id="1562314">
    <property type="gene designation" value="Tas2r144"/>
</dbReference>
<dbReference type="eggNOG" id="ENOG502SKRK">
    <property type="taxonomic scope" value="Eukaryota"/>
</dbReference>
<dbReference type="GeneTree" id="ENSGT01100000263477"/>
<dbReference type="HOGENOM" id="CLU_072337_3_0_1"/>
<dbReference type="InParanoid" id="Q67ET2"/>
<dbReference type="OMA" id="NFTHPLF"/>
<dbReference type="OrthoDB" id="8876749at2759"/>
<dbReference type="PhylomeDB" id="Q67ET2"/>
<dbReference type="TreeFam" id="TF335891"/>
<dbReference type="Reactome" id="R-RNO-418594">
    <property type="pathway name" value="G alpha (i) signalling events"/>
</dbReference>
<dbReference type="Reactome" id="R-RNO-420499">
    <property type="pathway name" value="Class C/3 (Metabotropic glutamate/pheromone receptors)"/>
</dbReference>
<dbReference type="Reactome" id="R-RNO-9717207">
    <property type="pathway name" value="Sensory perception of sweet, bitter, and umami (glutamate) taste"/>
</dbReference>
<dbReference type="PRO" id="PR:Q67ET2"/>
<dbReference type="Proteomes" id="UP000002494">
    <property type="component" value="Chromosome 4"/>
</dbReference>
<dbReference type="GO" id="GO:0016020">
    <property type="term" value="C:membrane"/>
    <property type="evidence" value="ECO:0000318"/>
    <property type="project" value="GO_Central"/>
</dbReference>
<dbReference type="GO" id="GO:0033038">
    <property type="term" value="F:bitter taste receptor activity"/>
    <property type="evidence" value="ECO:0000266"/>
    <property type="project" value="RGD"/>
</dbReference>
<dbReference type="GO" id="GO:0004930">
    <property type="term" value="F:G protein-coupled receptor activity"/>
    <property type="evidence" value="ECO:0007669"/>
    <property type="project" value="UniProtKB-KW"/>
</dbReference>
<dbReference type="GO" id="GO:0001580">
    <property type="term" value="P:detection of chemical stimulus involved in sensory perception of bitter taste"/>
    <property type="evidence" value="ECO:0000266"/>
    <property type="project" value="RGD"/>
</dbReference>
<dbReference type="CDD" id="cd15014">
    <property type="entry name" value="7tm_TAS2R40"/>
    <property type="match status" value="1"/>
</dbReference>
<dbReference type="FunFam" id="1.20.1070.10:FF:000055">
    <property type="entry name" value="Taste receptor type 2"/>
    <property type="match status" value="1"/>
</dbReference>
<dbReference type="Gene3D" id="1.20.1070.10">
    <property type="entry name" value="Rhodopsin 7-helix transmembrane proteins"/>
    <property type="match status" value="1"/>
</dbReference>
<dbReference type="InterPro" id="IPR007960">
    <property type="entry name" value="TAS2R"/>
</dbReference>
<dbReference type="PANTHER" id="PTHR11394">
    <property type="entry name" value="TASTE RECEPTOR TYPE 2"/>
    <property type="match status" value="1"/>
</dbReference>
<dbReference type="PANTHER" id="PTHR11394:SF47">
    <property type="entry name" value="TASTE RECEPTOR TYPE 2 MEMBER 40"/>
    <property type="match status" value="1"/>
</dbReference>
<dbReference type="Pfam" id="PF05296">
    <property type="entry name" value="TAS2R"/>
    <property type="match status" value="1"/>
</dbReference>
<dbReference type="SUPFAM" id="SSF81321">
    <property type="entry name" value="Family A G protein-coupled receptor-like"/>
    <property type="match status" value="1"/>
</dbReference>
<sequence>MAIITTDSDYYTHRYEVIIPFVVSTIDCIVGIIGNGFITVIYGTELVRSKRLPTGEHLMLMLSFSRLLLQIWIMVEITYQLFFPMIYNHNAMYKLFKTISVFLNYCNLWFAAWLNVFYCLKIVNFAHPLFLMMKQKIVVLMPRLMSLSVLVSISLSSFFSKDIFNVYMNTSVPIPFSNSTKMKYFFKTNVLNLAFLYYMGIFIPLFMFIMAAILLITSLKRHTLNMESSTTGSRDSSMEAHLGAIKSTSYSLILYIINALALFISMSNIFGAYSTWNSVCSFILTAYPAGQSVHLILRNPGLRRAWRRFQHHVRLYLKR</sequence>